<comment type="similarity">
    <text evidence="1">Belongs to the bacterial ribosomal protein bL33 family.</text>
</comment>
<dbReference type="EMBL" id="CP000813">
    <property type="protein sequence ID" value="ABV63963.1"/>
    <property type="molecule type" value="Genomic_DNA"/>
</dbReference>
<dbReference type="SMR" id="A8FI96"/>
<dbReference type="STRING" id="315750.BPUM_3310"/>
<dbReference type="KEGG" id="bpu:BPUM_3310"/>
<dbReference type="eggNOG" id="COG0267">
    <property type="taxonomic scope" value="Bacteria"/>
</dbReference>
<dbReference type="HOGENOM" id="CLU_190949_0_2_9"/>
<dbReference type="OrthoDB" id="197660at2"/>
<dbReference type="Proteomes" id="UP000001355">
    <property type="component" value="Chromosome"/>
</dbReference>
<dbReference type="GO" id="GO:0005737">
    <property type="term" value="C:cytoplasm"/>
    <property type="evidence" value="ECO:0007669"/>
    <property type="project" value="UniProtKB-ARBA"/>
</dbReference>
<dbReference type="GO" id="GO:1990904">
    <property type="term" value="C:ribonucleoprotein complex"/>
    <property type="evidence" value="ECO:0007669"/>
    <property type="project" value="UniProtKB-KW"/>
</dbReference>
<dbReference type="GO" id="GO:0005840">
    <property type="term" value="C:ribosome"/>
    <property type="evidence" value="ECO:0007669"/>
    <property type="project" value="UniProtKB-KW"/>
</dbReference>
<dbReference type="GO" id="GO:0003735">
    <property type="term" value="F:structural constituent of ribosome"/>
    <property type="evidence" value="ECO:0007669"/>
    <property type="project" value="InterPro"/>
</dbReference>
<dbReference type="GO" id="GO:0006412">
    <property type="term" value="P:translation"/>
    <property type="evidence" value="ECO:0007669"/>
    <property type="project" value="UniProtKB-UniRule"/>
</dbReference>
<dbReference type="Gene3D" id="2.20.28.120">
    <property type="entry name" value="Ribosomal protein L33"/>
    <property type="match status" value="1"/>
</dbReference>
<dbReference type="HAMAP" id="MF_00294">
    <property type="entry name" value="Ribosomal_bL33"/>
    <property type="match status" value="1"/>
</dbReference>
<dbReference type="InterPro" id="IPR001705">
    <property type="entry name" value="Ribosomal_bL33"/>
</dbReference>
<dbReference type="InterPro" id="IPR018264">
    <property type="entry name" value="Ribosomal_bL33_CS"/>
</dbReference>
<dbReference type="InterPro" id="IPR038584">
    <property type="entry name" value="Ribosomal_bL33_sf"/>
</dbReference>
<dbReference type="InterPro" id="IPR011332">
    <property type="entry name" value="Ribosomal_zn-bd"/>
</dbReference>
<dbReference type="NCBIfam" id="NF001764">
    <property type="entry name" value="PRK00504.1"/>
    <property type="match status" value="1"/>
</dbReference>
<dbReference type="NCBIfam" id="NF001860">
    <property type="entry name" value="PRK00595.1"/>
    <property type="match status" value="1"/>
</dbReference>
<dbReference type="NCBIfam" id="TIGR01023">
    <property type="entry name" value="rpmG_bact"/>
    <property type="match status" value="1"/>
</dbReference>
<dbReference type="PANTHER" id="PTHR43168">
    <property type="entry name" value="50S RIBOSOMAL PROTEIN L33, CHLOROPLASTIC"/>
    <property type="match status" value="1"/>
</dbReference>
<dbReference type="PANTHER" id="PTHR43168:SF2">
    <property type="entry name" value="LARGE RIBOSOMAL SUBUNIT PROTEIN BL33C"/>
    <property type="match status" value="1"/>
</dbReference>
<dbReference type="Pfam" id="PF00471">
    <property type="entry name" value="Ribosomal_L33"/>
    <property type="match status" value="1"/>
</dbReference>
<dbReference type="SUPFAM" id="SSF57829">
    <property type="entry name" value="Zn-binding ribosomal proteins"/>
    <property type="match status" value="1"/>
</dbReference>
<dbReference type="PROSITE" id="PS00582">
    <property type="entry name" value="RIBOSOMAL_L33"/>
    <property type="match status" value="1"/>
</dbReference>
<reference key="1">
    <citation type="journal article" date="2007" name="PLoS ONE">
        <title>Paradoxical DNA repair and peroxide resistance gene conservation in Bacillus pumilus SAFR-032.</title>
        <authorList>
            <person name="Gioia J."/>
            <person name="Yerrapragada S."/>
            <person name="Qin X."/>
            <person name="Jiang H."/>
            <person name="Igboeli O.C."/>
            <person name="Muzny D."/>
            <person name="Dugan-Rocha S."/>
            <person name="Ding Y."/>
            <person name="Hawes A."/>
            <person name="Liu W."/>
            <person name="Perez L."/>
            <person name="Kovar C."/>
            <person name="Dinh H."/>
            <person name="Lee S."/>
            <person name="Nazareth L."/>
            <person name="Blyth P."/>
            <person name="Holder M."/>
            <person name="Buhay C."/>
            <person name="Tirumalai M.R."/>
            <person name="Liu Y."/>
            <person name="Dasgupta I."/>
            <person name="Bokhetache L."/>
            <person name="Fujita M."/>
            <person name="Karouia F."/>
            <person name="Eswara Moorthy P."/>
            <person name="Siefert J."/>
            <person name="Uzman A."/>
            <person name="Buzumbo P."/>
            <person name="Verma A."/>
            <person name="Zwiya H."/>
            <person name="McWilliams B.D."/>
            <person name="Olowu A."/>
            <person name="Clinkenbeard K.D."/>
            <person name="Newcombe D."/>
            <person name="Golebiewski L."/>
            <person name="Petrosino J.F."/>
            <person name="Nicholson W.L."/>
            <person name="Fox G.E."/>
            <person name="Venkateswaran K."/>
            <person name="Highlander S.K."/>
            <person name="Weinstock G.M."/>
        </authorList>
    </citation>
    <scope>NUCLEOTIDE SEQUENCE [LARGE SCALE GENOMIC DNA]</scope>
    <source>
        <strain>SAFR-032</strain>
    </source>
</reference>
<keyword id="KW-0687">Ribonucleoprotein</keyword>
<keyword id="KW-0689">Ribosomal protein</keyword>
<accession>A8FI96</accession>
<protein>
    <recommendedName>
        <fullName evidence="1">Large ribosomal subunit protein bL33C</fullName>
    </recommendedName>
    <alternativeName>
        <fullName evidence="1">50S ribosomal protein L33 3</fullName>
    </alternativeName>
</protein>
<organism>
    <name type="scientific">Bacillus pumilus (strain SAFR-032)</name>
    <dbReference type="NCBI Taxonomy" id="315750"/>
    <lineage>
        <taxon>Bacteria</taxon>
        <taxon>Bacillati</taxon>
        <taxon>Bacillota</taxon>
        <taxon>Bacilli</taxon>
        <taxon>Bacillales</taxon>
        <taxon>Bacillaceae</taxon>
        <taxon>Bacillus</taxon>
    </lineage>
</organism>
<gene>
    <name evidence="1" type="primary">rpmG3</name>
    <name type="ordered locus">BPUM_3310</name>
</gene>
<name>RL333_BACP2</name>
<sequence>MRVKITLACTETGDRNYITTKNKRTNPDRLELKKYSPRLKKYTLHRETK</sequence>
<evidence type="ECO:0000255" key="1">
    <source>
        <dbReference type="HAMAP-Rule" id="MF_00294"/>
    </source>
</evidence>
<feature type="chain" id="PRO_0000356397" description="Large ribosomal subunit protein bL33C">
    <location>
        <begin position="1"/>
        <end position="49"/>
    </location>
</feature>
<proteinExistence type="inferred from homology"/>